<evidence type="ECO:0000250" key="1"/>
<evidence type="ECO:0000255" key="2">
    <source>
        <dbReference type="HAMAP-Rule" id="MF_01057"/>
    </source>
</evidence>
<evidence type="ECO:0000256" key="3">
    <source>
        <dbReference type="SAM" id="MobiDB-lite"/>
    </source>
</evidence>
<feature type="chain" id="PRO_0000288129" description="tRNA (guanine-N(7)-)-methyltransferase">
    <location>
        <begin position="1"/>
        <end position="255"/>
    </location>
</feature>
<feature type="region of interest" description="Disordered" evidence="3">
    <location>
        <begin position="1"/>
        <end position="29"/>
    </location>
</feature>
<feature type="compositionally biased region" description="Acidic residues" evidence="3">
    <location>
        <begin position="17"/>
        <end position="27"/>
    </location>
</feature>
<feature type="active site" evidence="1">
    <location>
        <position position="161"/>
    </location>
</feature>
<feature type="binding site" evidence="2">
    <location>
        <position position="86"/>
    </location>
    <ligand>
        <name>S-adenosyl-L-methionine</name>
        <dbReference type="ChEBI" id="CHEBI:59789"/>
    </ligand>
</feature>
<feature type="binding site" evidence="2">
    <location>
        <position position="111"/>
    </location>
    <ligand>
        <name>S-adenosyl-L-methionine</name>
        <dbReference type="ChEBI" id="CHEBI:59789"/>
    </ligand>
</feature>
<feature type="binding site" evidence="2">
    <location>
        <position position="138"/>
    </location>
    <ligand>
        <name>S-adenosyl-L-methionine</name>
        <dbReference type="ChEBI" id="CHEBI:59789"/>
    </ligand>
</feature>
<feature type="binding site" evidence="2">
    <location>
        <position position="161"/>
    </location>
    <ligand>
        <name>S-adenosyl-L-methionine</name>
        <dbReference type="ChEBI" id="CHEBI:59789"/>
    </ligand>
</feature>
<feature type="binding site" evidence="2">
    <location>
        <position position="165"/>
    </location>
    <ligand>
        <name>substrate</name>
    </ligand>
</feature>
<feature type="binding site" evidence="2">
    <location>
        <position position="197"/>
    </location>
    <ligand>
        <name>substrate</name>
    </ligand>
</feature>
<feature type="binding site" evidence="2">
    <location>
        <begin position="232"/>
        <end position="235"/>
    </location>
    <ligand>
        <name>substrate</name>
    </ligand>
</feature>
<accession>Q0BHL9</accession>
<proteinExistence type="inferred from homology"/>
<dbReference type="EC" id="2.1.1.33" evidence="2"/>
<dbReference type="EMBL" id="CP000440">
    <property type="protein sequence ID" value="ABI86354.1"/>
    <property type="molecule type" value="Genomic_DNA"/>
</dbReference>
<dbReference type="RefSeq" id="WP_011656168.1">
    <property type="nucleotide sequence ID" value="NC_008390.1"/>
</dbReference>
<dbReference type="SMR" id="Q0BHL9"/>
<dbReference type="GeneID" id="93083797"/>
<dbReference type="KEGG" id="bam:Bamb_0795"/>
<dbReference type="PATRIC" id="fig|339670.21.peg.795"/>
<dbReference type="eggNOG" id="COG0220">
    <property type="taxonomic scope" value="Bacteria"/>
</dbReference>
<dbReference type="UniPathway" id="UPA00989"/>
<dbReference type="Proteomes" id="UP000000662">
    <property type="component" value="Chromosome 1"/>
</dbReference>
<dbReference type="GO" id="GO:0043527">
    <property type="term" value="C:tRNA methyltransferase complex"/>
    <property type="evidence" value="ECO:0007669"/>
    <property type="project" value="TreeGrafter"/>
</dbReference>
<dbReference type="GO" id="GO:0008176">
    <property type="term" value="F:tRNA (guanine(46)-N7)-methyltransferase activity"/>
    <property type="evidence" value="ECO:0007669"/>
    <property type="project" value="UniProtKB-UniRule"/>
</dbReference>
<dbReference type="CDD" id="cd02440">
    <property type="entry name" value="AdoMet_MTases"/>
    <property type="match status" value="1"/>
</dbReference>
<dbReference type="FunFam" id="3.40.50.150:FF:000035">
    <property type="entry name" value="tRNA (guanine-N(7)-)-methyltransferase"/>
    <property type="match status" value="1"/>
</dbReference>
<dbReference type="Gene3D" id="3.40.50.150">
    <property type="entry name" value="Vaccinia Virus protein VP39"/>
    <property type="match status" value="1"/>
</dbReference>
<dbReference type="HAMAP" id="MF_01057">
    <property type="entry name" value="tRNA_methyltr_TrmB"/>
    <property type="match status" value="1"/>
</dbReference>
<dbReference type="InterPro" id="IPR029063">
    <property type="entry name" value="SAM-dependent_MTases_sf"/>
</dbReference>
<dbReference type="InterPro" id="IPR003358">
    <property type="entry name" value="tRNA_(Gua-N-7)_MeTrfase_Trmb"/>
</dbReference>
<dbReference type="InterPro" id="IPR055361">
    <property type="entry name" value="tRNA_methyltr_TrmB_bact"/>
</dbReference>
<dbReference type="NCBIfam" id="TIGR00091">
    <property type="entry name" value="tRNA (guanosine(46)-N7)-methyltransferase TrmB"/>
    <property type="match status" value="1"/>
</dbReference>
<dbReference type="PANTHER" id="PTHR23417">
    <property type="entry name" value="3-DEOXY-D-MANNO-OCTULOSONIC-ACID TRANSFERASE/TRNA GUANINE-N 7 - -METHYLTRANSFERASE"/>
    <property type="match status" value="1"/>
</dbReference>
<dbReference type="PANTHER" id="PTHR23417:SF14">
    <property type="entry name" value="PENTACOTRIPEPTIDE-REPEAT REGION OF PRORP DOMAIN-CONTAINING PROTEIN"/>
    <property type="match status" value="1"/>
</dbReference>
<dbReference type="Pfam" id="PF02390">
    <property type="entry name" value="Methyltransf_4"/>
    <property type="match status" value="1"/>
</dbReference>
<dbReference type="SUPFAM" id="SSF53335">
    <property type="entry name" value="S-adenosyl-L-methionine-dependent methyltransferases"/>
    <property type="match status" value="1"/>
</dbReference>
<dbReference type="PROSITE" id="PS51625">
    <property type="entry name" value="SAM_MT_TRMB"/>
    <property type="match status" value="1"/>
</dbReference>
<name>TRMB_BURCM</name>
<reference key="1">
    <citation type="submission" date="2006-08" db="EMBL/GenBank/DDBJ databases">
        <title>Complete sequence of chromosome 1 of Burkholderia cepacia AMMD.</title>
        <authorList>
            <person name="Copeland A."/>
            <person name="Lucas S."/>
            <person name="Lapidus A."/>
            <person name="Barry K."/>
            <person name="Detter J.C."/>
            <person name="Glavina del Rio T."/>
            <person name="Hammon N."/>
            <person name="Israni S."/>
            <person name="Pitluck S."/>
            <person name="Bruce D."/>
            <person name="Chain P."/>
            <person name="Malfatti S."/>
            <person name="Shin M."/>
            <person name="Vergez L."/>
            <person name="Schmutz J."/>
            <person name="Larimer F."/>
            <person name="Land M."/>
            <person name="Hauser L."/>
            <person name="Kyrpides N."/>
            <person name="Kim E."/>
            <person name="Parke J."/>
            <person name="Coenye T."/>
            <person name="Konstantinidis K."/>
            <person name="Ramette A."/>
            <person name="Tiedje J."/>
            <person name="Richardson P."/>
        </authorList>
    </citation>
    <scope>NUCLEOTIDE SEQUENCE [LARGE SCALE GENOMIC DNA]</scope>
    <source>
        <strain>ATCC BAA-244 / DSM 16087 / CCUG 44356 / LMG 19182 / AMMD</strain>
    </source>
</reference>
<organism>
    <name type="scientific">Burkholderia ambifaria (strain ATCC BAA-244 / DSM 16087 / CCUG 44356 / LMG 19182 / AMMD)</name>
    <name type="common">Burkholderia cepacia (strain AMMD)</name>
    <dbReference type="NCBI Taxonomy" id="339670"/>
    <lineage>
        <taxon>Bacteria</taxon>
        <taxon>Pseudomonadati</taxon>
        <taxon>Pseudomonadota</taxon>
        <taxon>Betaproteobacteria</taxon>
        <taxon>Burkholderiales</taxon>
        <taxon>Burkholderiaceae</taxon>
        <taxon>Burkholderia</taxon>
        <taxon>Burkholderia cepacia complex</taxon>
    </lineage>
</organism>
<keyword id="KW-0489">Methyltransferase</keyword>
<keyword id="KW-0949">S-adenosyl-L-methionine</keyword>
<keyword id="KW-0808">Transferase</keyword>
<keyword id="KW-0819">tRNA processing</keyword>
<gene>
    <name evidence="2" type="primary">trmB</name>
    <name type="ordered locus">Bamb_0795</name>
</gene>
<protein>
    <recommendedName>
        <fullName evidence="2">tRNA (guanine-N(7)-)-methyltransferase</fullName>
        <ecNumber evidence="2">2.1.1.33</ecNumber>
    </recommendedName>
    <alternativeName>
        <fullName evidence="2">tRNA (guanine(46)-N(7))-methyltransferase</fullName>
    </alternativeName>
    <alternativeName>
        <fullName evidence="2">tRNA(m7G46)-methyltransferase</fullName>
    </alternativeName>
</protein>
<sequence length="255" mass="28399">MMHDDPNEAGLPPDDAALPDEAADGADEVNPLHHRRIRSFVTRAGRVSTGQRRALDEFGPRFVVPYAAEIPDWDAVFGRSAPRILEIGFGMGASTAEIAAHRPGDDFLGVEVHEPGVGALLKLIGEQDLPNIRIIQHDAVEVLEHMLAPESLDGVHIFFPDPWHKARHHKRRLIQPPLVAHLASRLKPGAYLHCATDWQNYAEQMLEVLGAEPSLENTAADYAPRPDYRPITKFERRGLRLGHGVWDLVFRKRAG</sequence>
<comment type="function">
    <text evidence="2">Catalyzes the formation of N(7)-methylguanine at position 46 (m7G46) in tRNA.</text>
</comment>
<comment type="catalytic activity">
    <reaction evidence="2">
        <text>guanosine(46) in tRNA + S-adenosyl-L-methionine = N(7)-methylguanosine(46) in tRNA + S-adenosyl-L-homocysteine</text>
        <dbReference type="Rhea" id="RHEA:42708"/>
        <dbReference type="Rhea" id="RHEA-COMP:10188"/>
        <dbReference type="Rhea" id="RHEA-COMP:10189"/>
        <dbReference type="ChEBI" id="CHEBI:57856"/>
        <dbReference type="ChEBI" id="CHEBI:59789"/>
        <dbReference type="ChEBI" id="CHEBI:74269"/>
        <dbReference type="ChEBI" id="CHEBI:74480"/>
        <dbReference type="EC" id="2.1.1.33"/>
    </reaction>
</comment>
<comment type="pathway">
    <text evidence="2">tRNA modification; N(7)-methylguanine-tRNA biosynthesis.</text>
</comment>
<comment type="similarity">
    <text evidence="2">Belongs to the class I-like SAM-binding methyltransferase superfamily. TrmB family.</text>
</comment>